<evidence type="ECO:0000255" key="1">
    <source>
        <dbReference type="HAMAP-Rule" id="MF_01659"/>
    </source>
</evidence>
<comment type="function">
    <text evidence="1">Catalyzes the thiamine diphosphate-dependent decarboxylation of 2-oxoglutarate and the subsequent addition of the resulting succinic semialdehyde-thiamine pyrophosphate anion to isochorismate to yield 2-succinyl-5-enolpyruvyl-6-hydroxy-3-cyclohexene-1-carboxylate (SEPHCHC).</text>
</comment>
<comment type="catalytic activity">
    <reaction evidence="1">
        <text>isochorismate + 2-oxoglutarate + H(+) = 5-enolpyruvoyl-6-hydroxy-2-succinyl-cyclohex-3-ene-1-carboxylate + CO2</text>
        <dbReference type="Rhea" id="RHEA:25593"/>
        <dbReference type="ChEBI" id="CHEBI:15378"/>
        <dbReference type="ChEBI" id="CHEBI:16526"/>
        <dbReference type="ChEBI" id="CHEBI:16810"/>
        <dbReference type="ChEBI" id="CHEBI:29780"/>
        <dbReference type="ChEBI" id="CHEBI:58818"/>
        <dbReference type="EC" id="2.2.1.9"/>
    </reaction>
</comment>
<comment type="cofactor">
    <cofactor evidence="1">
        <name>Mg(2+)</name>
        <dbReference type="ChEBI" id="CHEBI:18420"/>
    </cofactor>
    <cofactor evidence="1">
        <name>Mn(2+)</name>
        <dbReference type="ChEBI" id="CHEBI:29035"/>
    </cofactor>
</comment>
<comment type="cofactor">
    <cofactor evidence="1">
        <name>thiamine diphosphate</name>
        <dbReference type="ChEBI" id="CHEBI:58937"/>
    </cofactor>
    <text evidence="1">Binds 1 thiamine pyrophosphate per subunit.</text>
</comment>
<comment type="pathway">
    <text evidence="1">Quinol/quinone metabolism; 1,4-dihydroxy-2-naphthoate biosynthesis; 1,4-dihydroxy-2-naphthoate from chorismate: step 2/7.</text>
</comment>
<comment type="pathway">
    <text evidence="1">Quinol/quinone metabolism; menaquinone biosynthesis.</text>
</comment>
<comment type="subunit">
    <text evidence="1">Homodimer.</text>
</comment>
<comment type="similarity">
    <text evidence="1">Belongs to the TPP enzyme family. MenD subfamily.</text>
</comment>
<keyword id="KW-0460">Magnesium</keyword>
<keyword id="KW-0464">Manganese</keyword>
<keyword id="KW-0474">Menaquinone biosynthesis</keyword>
<keyword id="KW-0479">Metal-binding</keyword>
<keyword id="KW-1185">Reference proteome</keyword>
<keyword id="KW-0786">Thiamine pyrophosphate</keyword>
<keyword id="KW-0808">Transferase</keyword>
<gene>
    <name evidence="1" type="primary">menD</name>
    <name type="ordered locus">SSON_2325</name>
</gene>
<proteinExistence type="inferred from homology"/>
<sequence>MSVSAFNRRWAAVILEALTRHGVRHICIAPGSRSTPLTLAAAENSAFIHHTHFDERGLGHLALGLAKVSKQPVAVIVTSGTAVANLYPALIEAGLTGEKLILLTADRPPELIDCGANQAIRQPGMFASHPTHSISLPRPTQDIPARWLVSTIDHALGTLHSGGVHINCPFAEPLYGEMDDTGLSWQQRLGDWWQDDKPWLREAPRLESEKQRDWFFWRQKRGVVVAGRMSAEEGKKVALWAQTLGWPLIGDVLSQTGQPLPCADLWLGNAKATSELQQAQIVVQLGSSLTGKRLLQWQASCEPEEYWIVDDIEGRLDPAHHRGRRLIANIADWLELHPAEKRQPWCVEIPRLAEQAMQAVIARRDAFGEAQLAHRISDYLPEQGQLFVGNSLVVRLIDALSQLPAGYPVYSNRGASGIDGLLSTAAGVQRASGKPTLAIVGDLSALYDLNALALLRQVSAPLILIVVNNNGGQIFSLLPTPKSERERFYLMPQNVHFEHAAAMFELKYHRPQNWQELETALADAWRTPTTTVIEMVVNDTDGAQTLQQLLAQVSHL</sequence>
<accession>Q3YZU2</accession>
<reference key="1">
    <citation type="journal article" date="2005" name="Nucleic Acids Res.">
        <title>Genome dynamics and diversity of Shigella species, the etiologic agents of bacillary dysentery.</title>
        <authorList>
            <person name="Yang F."/>
            <person name="Yang J."/>
            <person name="Zhang X."/>
            <person name="Chen L."/>
            <person name="Jiang Y."/>
            <person name="Yan Y."/>
            <person name="Tang X."/>
            <person name="Wang J."/>
            <person name="Xiong Z."/>
            <person name="Dong J."/>
            <person name="Xue Y."/>
            <person name="Zhu Y."/>
            <person name="Xu X."/>
            <person name="Sun L."/>
            <person name="Chen S."/>
            <person name="Nie H."/>
            <person name="Peng J."/>
            <person name="Xu J."/>
            <person name="Wang Y."/>
            <person name="Yuan Z."/>
            <person name="Wen Y."/>
            <person name="Yao Z."/>
            <person name="Shen Y."/>
            <person name="Qiang B."/>
            <person name="Hou Y."/>
            <person name="Yu J."/>
            <person name="Jin Q."/>
        </authorList>
    </citation>
    <scope>NUCLEOTIDE SEQUENCE [LARGE SCALE GENOMIC DNA]</scope>
    <source>
        <strain>Ss046</strain>
    </source>
</reference>
<name>MEND_SHISS</name>
<organism>
    <name type="scientific">Shigella sonnei (strain Ss046)</name>
    <dbReference type="NCBI Taxonomy" id="300269"/>
    <lineage>
        <taxon>Bacteria</taxon>
        <taxon>Pseudomonadati</taxon>
        <taxon>Pseudomonadota</taxon>
        <taxon>Gammaproteobacteria</taxon>
        <taxon>Enterobacterales</taxon>
        <taxon>Enterobacteriaceae</taxon>
        <taxon>Shigella</taxon>
    </lineage>
</organism>
<protein>
    <recommendedName>
        <fullName evidence="1">2-succinyl-5-enolpyruvyl-6-hydroxy-3-cyclohexene-1-carboxylate synthase</fullName>
        <shortName evidence="1">SEPHCHC synthase</shortName>
        <ecNumber evidence="1">2.2.1.9</ecNumber>
    </recommendedName>
    <alternativeName>
        <fullName evidence="1">Menaquinone biosynthesis protein MenD</fullName>
    </alternativeName>
</protein>
<dbReference type="EC" id="2.2.1.9" evidence="1"/>
<dbReference type="EMBL" id="CP000038">
    <property type="protein sequence ID" value="AAZ88970.1"/>
    <property type="molecule type" value="Genomic_DNA"/>
</dbReference>
<dbReference type="RefSeq" id="WP_005136690.1">
    <property type="nucleotide sequence ID" value="NC_007384.1"/>
</dbReference>
<dbReference type="SMR" id="Q3YZU2"/>
<dbReference type="GeneID" id="93774909"/>
<dbReference type="KEGG" id="ssn:SSON_2325"/>
<dbReference type="HOGENOM" id="CLU_006051_3_0_6"/>
<dbReference type="UniPathway" id="UPA00079"/>
<dbReference type="UniPathway" id="UPA01057">
    <property type="reaction ID" value="UER00164"/>
</dbReference>
<dbReference type="Proteomes" id="UP000002529">
    <property type="component" value="Chromosome"/>
</dbReference>
<dbReference type="GO" id="GO:0070204">
    <property type="term" value="F:2-succinyl-5-enolpyruvyl-6-hydroxy-3-cyclohexene-1-carboxylic-acid synthase activity"/>
    <property type="evidence" value="ECO:0007669"/>
    <property type="project" value="UniProtKB-UniRule"/>
</dbReference>
<dbReference type="GO" id="GO:0000287">
    <property type="term" value="F:magnesium ion binding"/>
    <property type="evidence" value="ECO:0007669"/>
    <property type="project" value="UniProtKB-UniRule"/>
</dbReference>
<dbReference type="GO" id="GO:0030145">
    <property type="term" value="F:manganese ion binding"/>
    <property type="evidence" value="ECO:0007669"/>
    <property type="project" value="UniProtKB-UniRule"/>
</dbReference>
<dbReference type="GO" id="GO:0030976">
    <property type="term" value="F:thiamine pyrophosphate binding"/>
    <property type="evidence" value="ECO:0007669"/>
    <property type="project" value="UniProtKB-UniRule"/>
</dbReference>
<dbReference type="GO" id="GO:0009234">
    <property type="term" value="P:menaquinone biosynthetic process"/>
    <property type="evidence" value="ECO:0007669"/>
    <property type="project" value="UniProtKB-UniRule"/>
</dbReference>
<dbReference type="CDD" id="cd07037">
    <property type="entry name" value="TPP_PYR_MenD"/>
    <property type="match status" value="1"/>
</dbReference>
<dbReference type="CDD" id="cd02009">
    <property type="entry name" value="TPP_SHCHC_synthase"/>
    <property type="match status" value="1"/>
</dbReference>
<dbReference type="FunFam" id="3.40.50.1220:FF:000010">
    <property type="entry name" value="2-succinyl-5-enolpyruvyl-6-hydroxy-3-cyclohexene-1-carboxylate synthase"/>
    <property type="match status" value="1"/>
</dbReference>
<dbReference type="FunFam" id="3.40.50.970:FF:000029">
    <property type="entry name" value="2-succinyl-5-enolpyruvyl-6-hydroxy-3-cyclohexene-1-carboxylate synthase"/>
    <property type="match status" value="1"/>
</dbReference>
<dbReference type="Gene3D" id="3.40.50.970">
    <property type="match status" value="2"/>
</dbReference>
<dbReference type="Gene3D" id="3.40.50.1220">
    <property type="entry name" value="TPP-binding domain"/>
    <property type="match status" value="1"/>
</dbReference>
<dbReference type="HAMAP" id="MF_01659">
    <property type="entry name" value="MenD"/>
    <property type="match status" value="1"/>
</dbReference>
<dbReference type="InterPro" id="IPR004433">
    <property type="entry name" value="MenaQ_synth_MenD"/>
</dbReference>
<dbReference type="InterPro" id="IPR032264">
    <property type="entry name" value="MenD_middle"/>
</dbReference>
<dbReference type="InterPro" id="IPR029061">
    <property type="entry name" value="THDP-binding"/>
</dbReference>
<dbReference type="InterPro" id="IPR012001">
    <property type="entry name" value="Thiamin_PyroP_enz_TPP-bd_dom"/>
</dbReference>
<dbReference type="InterPro" id="IPR011766">
    <property type="entry name" value="TPP_enzyme_TPP-bd"/>
</dbReference>
<dbReference type="NCBIfam" id="TIGR00173">
    <property type="entry name" value="menD"/>
    <property type="match status" value="1"/>
</dbReference>
<dbReference type="PANTHER" id="PTHR42916">
    <property type="entry name" value="2-SUCCINYL-5-ENOLPYRUVYL-6-HYDROXY-3-CYCLOHEXENE-1-CARBOXYLATE SYNTHASE"/>
    <property type="match status" value="1"/>
</dbReference>
<dbReference type="PANTHER" id="PTHR42916:SF1">
    <property type="entry name" value="PROTEIN PHYLLO, CHLOROPLASTIC"/>
    <property type="match status" value="1"/>
</dbReference>
<dbReference type="Pfam" id="PF02775">
    <property type="entry name" value="TPP_enzyme_C"/>
    <property type="match status" value="1"/>
</dbReference>
<dbReference type="Pfam" id="PF16582">
    <property type="entry name" value="TPP_enzyme_M_2"/>
    <property type="match status" value="1"/>
</dbReference>
<dbReference type="Pfam" id="PF02776">
    <property type="entry name" value="TPP_enzyme_N"/>
    <property type="match status" value="1"/>
</dbReference>
<dbReference type="PIRSF" id="PIRSF004983">
    <property type="entry name" value="MenD"/>
    <property type="match status" value="1"/>
</dbReference>
<dbReference type="SUPFAM" id="SSF52518">
    <property type="entry name" value="Thiamin diphosphate-binding fold (THDP-binding)"/>
    <property type="match status" value="2"/>
</dbReference>
<feature type="chain" id="PRO_0000341847" description="2-succinyl-5-enolpyruvyl-6-hydroxy-3-cyclohexene-1-carboxylate synthase">
    <location>
        <begin position="1"/>
        <end position="556"/>
    </location>
</feature>